<reference key="1">
    <citation type="journal article" date="1988" name="J. Biol. Chem.">
        <title>Primary structure of apolipophorin-III from the migratory locust, Locusta migratoria. Potential amphipathic structures and molecular evolution of an insect apolipoprotein.</title>
        <authorList>
            <person name="Kanost M.R."/>
            <person name="Boguski M.S."/>
            <person name="Freeman M."/>
            <person name="Gordon J.I."/>
            <person name="Wyatt G.R."/>
            <person name="Wells M.A."/>
        </authorList>
    </citation>
    <scope>NUCLEOTIDE SEQUENCE [MRNA]</scope>
    <scope>PARTIAL PROTEIN SEQUENCE</scope>
</reference>
<reference key="2">
    <citation type="journal article" date="1991" name="Eur. J. Biochem.">
        <title>Different isoforms of an apoprotein (apolipophorin III) associate with lipoproteins in Locusta migratoria.</title>
        <authorList>
            <person name="van der Horst D.J."/>
            <person name="van Doorn J.M."/>
            <person name="Voshol H."/>
            <person name="Kanost M.R."/>
            <person name="Ziegler R."/>
            <person name="Beenakkers A.M.T."/>
        </authorList>
    </citation>
    <scope>PROTEIN SEQUENCE OF 17-58</scope>
</reference>
<reference key="3">
    <citation type="journal article" date="1991" name="Biochemistry">
        <title>Molecular structure of an apolipoprotein determined at 2.5-A resolution.</title>
        <authorList>
            <person name="Breiter D.R."/>
            <person name="Kanost M.R."/>
            <person name="Benning M.M."/>
            <person name="Wesenberg G."/>
            <person name="Law J.H."/>
            <person name="Wells M.A."/>
            <person name="Rayment I."/>
            <person name="Holden H.M."/>
        </authorList>
    </citation>
    <scope>X-RAY CRYSTALLOGRAPHY (2.5 ANGSTROMS)</scope>
</reference>
<keyword id="KW-0002">3D-structure</keyword>
<keyword id="KW-0903">Direct protein sequencing</keyword>
<keyword id="KW-0325">Glycoprotein</keyword>
<keyword id="KW-0445">Lipid transport</keyword>
<keyword id="KW-0677">Repeat</keyword>
<keyword id="KW-0964">Secreted</keyword>
<keyword id="KW-0732">Signal</keyword>
<keyword id="KW-0813">Transport</keyword>
<dbReference type="EMBL" id="J03888">
    <property type="protein sequence ID" value="AAA29282.1"/>
    <property type="molecule type" value="mRNA"/>
</dbReference>
<dbReference type="PIR" id="A28992">
    <property type="entry name" value="A28992"/>
</dbReference>
<dbReference type="PIR" id="S14101">
    <property type="entry name" value="S14101"/>
</dbReference>
<dbReference type="PDB" id="1AEP">
    <property type="method" value="X-ray"/>
    <property type="resolution" value="2.70 A"/>
    <property type="chains" value="A=20-179"/>
</dbReference>
<dbReference type="PDB" id="1LS4">
    <property type="method" value="NMR"/>
    <property type="chains" value="A=1-179"/>
</dbReference>
<dbReference type="PDBsum" id="1AEP"/>
<dbReference type="PDBsum" id="1LS4"/>
<dbReference type="SMR" id="P10762"/>
<dbReference type="GlyConnect" id="55">
    <property type="glycosylation" value="5 N-Linked glycans"/>
</dbReference>
<dbReference type="EvolutionaryTrace" id="P10762"/>
<dbReference type="GO" id="GO:0005576">
    <property type="term" value="C:extracellular region"/>
    <property type="evidence" value="ECO:0007669"/>
    <property type="project" value="UniProtKB-SubCell"/>
</dbReference>
<dbReference type="GO" id="GO:0006869">
    <property type="term" value="P:lipid transport"/>
    <property type="evidence" value="ECO:0007669"/>
    <property type="project" value="UniProtKB-KW"/>
</dbReference>
<dbReference type="CDD" id="cd13769">
    <property type="entry name" value="ApoLp-III_like"/>
    <property type="match status" value="1"/>
</dbReference>
<dbReference type="Gene3D" id="1.20.120.20">
    <property type="entry name" value="Apolipoprotein"/>
    <property type="match status" value="1"/>
</dbReference>
<dbReference type="SUPFAM" id="SSF47857">
    <property type="entry name" value="Apolipophorin-III"/>
    <property type="match status" value="1"/>
</dbReference>
<feature type="signal peptide" evidence="2">
    <location>
        <begin position="1"/>
        <end position="16"/>
    </location>
</feature>
<feature type="chain" id="PRO_0000002046" description="Apolipophorin-3b">
    <location>
        <begin position="17"/>
        <end position="179"/>
    </location>
</feature>
<feature type="repeat">
    <location>
        <begin position="30"/>
        <end position="40"/>
    </location>
</feature>
<feature type="repeat">
    <location>
        <begin position="41"/>
        <end position="52"/>
    </location>
</feature>
<feature type="repeat">
    <location>
        <begin position="53"/>
        <end position="60"/>
    </location>
</feature>
<feature type="repeat">
    <location>
        <begin position="61"/>
        <end position="78"/>
    </location>
</feature>
<feature type="repeat">
    <location>
        <begin position="79"/>
        <end position="89"/>
    </location>
</feature>
<feature type="repeat">
    <location>
        <begin position="90"/>
        <end position="99"/>
    </location>
</feature>
<feature type="repeat">
    <location>
        <begin position="100"/>
        <end position="113"/>
    </location>
</feature>
<feature type="repeat">
    <location>
        <begin position="114"/>
        <end position="127"/>
    </location>
</feature>
<feature type="repeat">
    <location>
        <begin position="128"/>
        <end position="140"/>
    </location>
</feature>
<feature type="repeat">
    <location>
        <begin position="141"/>
        <end position="151"/>
    </location>
</feature>
<feature type="repeat">
    <location>
        <begin position="152"/>
        <end position="165"/>
    </location>
</feature>
<feature type="repeat">
    <location>
        <begin position="166"/>
        <end position="179"/>
    </location>
</feature>
<feature type="region of interest" description="Disordered" evidence="1">
    <location>
        <begin position="152"/>
        <end position="179"/>
    </location>
</feature>
<feature type="compositionally biased region" description="Polar residues" evidence="1">
    <location>
        <begin position="165"/>
        <end position="179"/>
    </location>
</feature>
<feature type="glycosylation site" description="N-linked (GlcNAc...) asparagine">
    <location>
        <position position="34"/>
    </location>
</feature>
<feature type="glycosylation site" description="N-linked (GlcNAc...) asparagine">
    <location>
        <position position="101"/>
    </location>
</feature>
<feature type="sequence conflict" description="In Ref. 1; AAA29282." evidence="3" ref="1">
    <original>R</original>
    <variation>A</variation>
    <location>
        <position position="95"/>
    </location>
</feature>
<feature type="sequence conflict" description="In Ref. 1; AAA29282." evidence="3" ref="1">
    <original>AQPA</original>
    <variation>LNLQ</variation>
    <location>
        <begin position="111"/>
        <end position="114"/>
    </location>
</feature>
<feature type="sequence conflict" description="In Ref. 1; AAA29282." evidence="3" ref="1">
    <original>TSQPRPSV</original>
    <variation>DIATKTQAS</variation>
    <location>
        <begin position="133"/>
        <end position="140"/>
    </location>
</feature>
<feature type="turn" evidence="5">
    <location>
        <begin position="20"/>
        <end position="23"/>
    </location>
</feature>
<feature type="helix" evidence="4">
    <location>
        <begin position="26"/>
        <end position="44"/>
    </location>
</feature>
<feature type="helix" evidence="4">
    <location>
        <begin position="45"/>
        <end position="49"/>
    </location>
</feature>
<feature type="helix" evidence="4">
    <location>
        <begin position="55"/>
        <end position="82"/>
    </location>
</feature>
<feature type="helix" evidence="4">
    <location>
        <begin position="88"/>
        <end position="102"/>
    </location>
</feature>
<feature type="strand" evidence="4">
    <location>
        <begin position="105"/>
        <end position="108"/>
    </location>
</feature>
<feature type="helix" evidence="4">
    <location>
        <begin position="113"/>
        <end position="140"/>
    </location>
</feature>
<feature type="helix" evidence="4">
    <location>
        <begin position="146"/>
        <end position="148"/>
    </location>
</feature>
<feature type="helix" evidence="4">
    <location>
        <begin position="149"/>
        <end position="172"/>
    </location>
</feature>
<accession>P10762</accession>
<evidence type="ECO:0000256" key="1">
    <source>
        <dbReference type="SAM" id="MobiDB-lite"/>
    </source>
</evidence>
<evidence type="ECO:0000269" key="2">
    <source>
    </source>
</evidence>
<evidence type="ECO:0000305" key="3"/>
<evidence type="ECO:0007829" key="4">
    <source>
        <dbReference type="PDB" id="1AEP"/>
    </source>
</evidence>
<evidence type="ECO:0007829" key="5">
    <source>
        <dbReference type="PDB" id="1LS4"/>
    </source>
</evidence>
<comment type="function">
    <text>Assists in the loading of diacylglycerol, generated from triacylglycerol stores in the fat body through the action of adipokinetic hormone, into lipophorin, the hemolymph lipoprotein. It increases the lipid carrying capacity of lipophorin by covering the expanding hydrophobic surface resulting from diacylglycerol uptake. It thus plays a critical role in the transport of lipids during flight in several species of insects.</text>
</comment>
<comment type="subunit">
    <text>Equilibrium between a soluble monomer and a bound lipoprotein form. Apolipophorin-3 associates with lipophorin during lipid loading until each particle contains 14 molecules of apolipophorin-3 in L.migratoria (5 molecules of apolipophorin-3a and 9 of apolipophorin-3b).</text>
</comment>
<comment type="subcellular location">
    <subcellularLocation>
        <location>Secreted</location>
    </subcellularLocation>
</comment>
<comment type="tissue specificity">
    <text>Hemolymph.</text>
</comment>
<comment type="miscellaneous">
    <text>Two isoforms of apolipophorin-3 (a and b) have been found and occur in a ratio of 5a:9b in the hemolymph.</text>
</comment>
<comment type="similarity">
    <text evidence="3">Belongs to the insect apolipophorin-3 family.</text>
</comment>
<comment type="online information" name="Protein Spotlight">
    <link uri="https://www.proteinspotlight.org/back_issues/059"/>
    <text>Lipid freight - Issue 59 of June 2005</text>
</comment>
<sequence>MNTLLAVLMLAVAAQARPDAAGHVNIAEAVQQLNHTIVNAAHELHETLGLPTPDEALNLLTEQANAFKTKIAEVTTSLKQEAEKHQGSVAEQLNRFARNLNNSIHDAATSAQPADQLNSLQSALTNVGHQWQTSQPRPSVAQEAWAPVQSALQEAAEKTKEAAANLQNSIQSAVQKPAN</sequence>
<name>APL3_LOCMI</name>
<proteinExistence type="evidence at protein level"/>
<organism>
    <name type="scientific">Locusta migratoria</name>
    <name type="common">Migratory locust</name>
    <dbReference type="NCBI Taxonomy" id="7004"/>
    <lineage>
        <taxon>Eukaryota</taxon>
        <taxon>Metazoa</taxon>
        <taxon>Ecdysozoa</taxon>
        <taxon>Arthropoda</taxon>
        <taxon>Hexapoda</taxon>
        <taxon>Insecta</taxon>
        <taxon>Pterygota</taxon>
        <taxon>Neoptera</taxon>
        <taxon>Polyneoptera</taxon>
        <taxon>Orthoptera</taxon>
        <taxon>Caelifera</taxon>
        <taxon>Acrididea</taxon>
        <taxon>Acridomorpha</taxon>
        <taxon>Acridoidea</taxon>
        <taxon>Acrididae</taxon>
        <taxon>Oedipodinae</taxon>
        <taxon>Locusta</taxon>
    </lineage>
</organism>
<protein>
    <recommendedName>
        <fullName>Apolipophorin-3b</fullName>
    </recommendedName>
    <alternativeName>
        <fullName>Apolipophorin-IIIb</fullName>
        <shortName>ApoLp-IIIb</shortName>
    </alternativeName>
</protein>